<accession>Q68WZ8</accession>
<proteinExistence type="inferred from homology"/>
<comment type="function">
    <text evidence="1">Catalyzes the reversible oxidation of malate to oxaloacetate.</text>
</comment>
<comment type="catalytic activity">
    <reaction evidence="1">
        <text>(S)-malate + NAD(+) = oxaloacetate + NADH + H(+)</text>
        <dbReference type="Rhea" id="RHEA:21432"/>
        <dbReference type="ChEBI" id="CHEBI:15378"/>
        <dbReference type="ChEBI" id="CHEBI:15589"/>
        <dbReference type="ChEBI" id="CHEBI:16452"/>
        <dbReference type="ChEBI" id="CHEBI:57540"/>
        <dbReference type="ChEBI" id="CHEBI:57945"/>
        <dbReference type="EC" id="1.1.1.37"/>
    </reaction>
</comment>
<comment type="similarity">
    <text evidence="1">Belongs to the LDH/MDH superfamily. MDH type 3 family.</text>
</comment>
<name>MDH_RICTY</name>
<gene>
    <name evidence="1" type="primary">mdh</name>
    <name type="ordered locus">RT0365</name>
</gene>
<keyword id="KW-0520">NAD</keyword>
<keyword id="KW-0560">Oxidoreductase</keyword>
<keyword id="KW-0816">Tricarboxylic acid cycle</keyword>
<protein>
    <recommendedName>
        <fullName evidence="1">Malate dehydrogenase</fullName>
        <ecNumber evidence="1">1.1.1.37</ecNumber>
    </recommendedName>
</protein>
<organism>
    <name type="scientific">Rickettsia typhi (strain ATCC VR-144 / Wilmington)</name>
    <dbReference type="NCBI Taxonomy" id="257363"/>
    <lineage>
        <taxon>Bacteria</taxon>
        <taxon>Pseudomonadati</taxon>
        <taxon>Pseudomonadota</taxon>
        <taxon>Alphaproteobacteria</taxon>
        <taxon>Rickettsiales</taxon>
        <taxon>Rickettsiaceae</taxon>
        <taxon>Rickettsieae</taxon>
        <taxon>Rickettsia</taxon>
        <taxon>typhus group</taxon>
    </lineage>
</organism>
<evidence type="ECO:0000255" key="1">
    <source>
        <dbReference type="HAMAP-Rule" id="MF_00487"/>
    </source>
</evidence>
<feature type="chain" id="PRO_0000113470" description="Malate dehydrogenase">
    <location>
        <begin position="1"/>
        <end position="314"/>
    </location>
</feature>
<feature type="active site" description="Proton acceptor" evidence="1">
    <location>
        <position position="177"/>
    </location>
</feature>
<feature type="binding site" evidence="1">
    <location>
        <begin position="11"/>
        <end position="16"/>
    </location>
    <ligand>
        <name>NAD(+)</name>
        <dbReference type="ChEBI" id="CHEBI:57540"/>
    </ligand>
</feature>
<feature type="binding site" evidence="1">
    <location>
        <position position="35"/>
    </location>
    <ligand>
        <name>NAD(+)</name>
        <dbReference type="ChEBI" id="CHEBI:57540"/>
    </ligand>
</feature>
<feature type="binding site" evidence="1">
    <location>
        <position position="84"/>
    </location>
    <ligand>
        <name>substrate</name>
    </ligand>
</feature>
<feature type="binding site" evidence="1">
    <location>
        <position position="90"/>
    </location>
    <ligand>
        <name>substrate</name>
    </ligand>
</feature>
<feature type="binding site" evidence="1">
    <location>
        <position position="97"/>
    </location>
    <ligand>
        <name>NAD(+)</name>
        <dbReference type="ChEBI" id="CHEBI:57540"/>
    </ligand>
</feature>
<feature type="binding site" evidence="1">
    <location>
        <begin position="120"/>
        <end position="122"/>
    </location>
    <ligand>
        <name>NAD(+)</name>
        <dbReference type="ChEBI" id="CHEBI:57540"/>
    </ligand>
</feature>
<feature type="binding site" evidence="1">
    <location>
        <position position="122"/>
    </location>
    <ligand>
        <name>substrate</name>
    </ligand>
</feature>
<feature type="binding site" evidence="1">
    <location>
        <position position="153"/>
    </location>
    <ligand>
        <name>substrate</name>
    </ligand>
</feature>
<sequence length="314" mass="33833">MTKNPKISLIGSGNIGGTLAHLISLKKLGDIVLFDVAEGVPQGKALDIMQAATIAGADIKIKGTNNYKDIEGSDAVIITAGLPRKPGMSRDDLISVNTKIMQDVAQNIKKYARNAFVIVITNPLDIMVYVMLKESGLPHNKVIGMAGVLDSSRFNLFLAEEFKVSVRNVNSIVLGGHGDAMVPLVRYSTISGVPIPDLIKMGLSSNKNIEKIIDRTRNGGGEIVALLKTGSAYYAPAASAIAMLESYLKDKRQILTCAAYLQGEYDVHDLYIGVPIIIGKEGVIKVIELQLTEEEKILFDKSVVGVKKLIDAIQ</sequence>
<reference key="1">
    <citation type="journal article" date="2004" name="J. Bacteriol.">
        <title>Complete genome sequence of Rickettsia typhi and comparison with sequences of other Rickettsiae.</title>
        <authorList>
            <person name="McLeod M.P."/>
            <person name="Qin X."/>
            <person name="Karpathy S.E."/>
            <person name="Gioia J."/>
            <person name="Highlander S.K."/>
            <person name="Fox G.E."/>
            <person name="McNeill T.Z."/>
            <person name="Jiang H."/>
            <person name="Muzny D."/>
            <person name="Jacob L.S."/>
            <person name="Hawes A.C."/>
            <person name="Sodergren E."/>
            <person name="Gill R."/>
            <person name="Hume J."/>
            <person name="Morgan M."/>
            <person name="Fan G."/>
            <person name="Amin A.G."/>
            <person name="Gibbs R.A."/>
            <person name="Hong C."/>
            <person name="Yu X.-J."/>
            <person name="Walker D.H."/>
            <person name="Weinstock G.M."/>
        </authorList>
    </citation>
    <scope>NUCLEOTIDE SEQUENCE [LARGE SCALE GENOMIC DNA]</scope>
    <source>
        <strain>ATCC VR-144 / Wilmington</strain>
    </source>
</reference>
<dbReference type="EC" id="1.1.1.37" evidence="1"/>
<dbReference type="EMBL" id="AE017197">
    <property type="protein sequence ID" value="AAU03844.1"/>
    <property type="molecule type" value="Genomic_DNA"/>
</dbReference>
<dbReference type="RefSeq" id="WP_011190828.1">
    <property type="nucleotide sequence ID" value="NC_006142.1"/>
</dbReference>
<dbReference type="SMR" id="Q68WZ8"/>
<dbReference type="KEGG" id="rty:RT0365"/>
<dbReference type="eggNOG" id="COG0039">
    <property type="taxonomic scope" value="Bacteria"/>
</dbReference>
<dbReference type="HOGENOM" id="CLU_045401_2_1_5"/>
<dbReference type="OrthoDB" id="9802969at2"/>
<dbReference type="Proteomes" id="UP000000604">
    <property type="component" value="Chromosome"/>
</dbReference>
<dbReference type="GO" id="GO:0004459">
    <property type="term" value="F:L-lactate dehydrogenase activity"/>
    <property type="evidence" value="ECO:0007669"/>
    <property type="project" value="TreeGrafter"/>
</dbReference>
<dbReference type="GO" id="GO:0030060">
    <property type="term" value="F:L-malate dehydrogenase (NAD+) activity"/>
    <property type="evidence" value="ECO:0007669"/>
    <property type="project" value="UniProtKB-UniRule"/>
</dbReference>
<dbReference type="GO" id="GO:0006089">
    <property type="term" value="P:lactate metabolic process"/>
    <property type="evidence" value="ECO:0007669"/>
    <property type="project" value="TreeGrafter"/>
</dbReference>
<dbReference type="GO" id="GO:0006099">
    <property type="term" value="P:tricarboxylic acid cycle"/>
    <property type="evidence" value="ECO:0007669"/>
    <property type="project" value="UniProtKB-UniRule"/>
</dbReference>
<dbReference type="CDD" id="cd01339">
    <property type="entry name" value="LDH-like_MDH"/>
    <property type="match status" value="1"/>
</dbReference>
<dbReference type="FunFam" id="3.40.50.720:FF:000018">
    <property type="entry name" value="Malate dehydrogenase"/>
    <property type="match status" value="1"/>
</dbReference>
<dbReference type="FunFam" id="3.90.110.10:FF:000004">
    <property type="entry name" value="Malate dehydrogenase"/>
    <property type="match status" value="1"/>
</dbReference>
<dbReference type="Gene3D" id="3.90.110.10">
    <property type="entry name" value="Lactate dehydrogenase/glycoside hydrolase, family 4, C-terminal"/>
    <property type="match status" value="1"/>
</dbReference>
<dbReference type="Gene3D" id="3.40.50.720">
    <property type="entry name" value="NAD(P)-binding Rossmann-like Domain"/>
    <property type="match status" value="1"/>
</dbReference>
<dbReference type="HAMAP" id="MF_00487">
    <property type="entry name" value="Malate_dehydrog_3"/>
    <property type="match status" value="1"/>
</dbReference>
<dbReference type="InterPro" id="IPR001557">
    <property type="entry name" value="L-lactate/malate_DH"/>
</dbReference>
<dbReference type="InterPro" id="IPR022383">
    <property type="entry name" value="Lactate/malate_DH_C"/>
</dbReference>
<dbReference type="InterPro" id="IPR001236">
    <property type="entry name" value="Lactate/malate_DH_N"/>
</dbReference>
<dbReference type="InterPro" id="IPR015955">
    <property type="entry name" value="Lactate_DH/Glyco_Ohase_4_C"/>
</dbReference>
<dbReference type="InterPro" id="IPR011275">
    <property type="entry name" value="Malate_DH_type3"/>
</dbReference>
<dbReference type="InterPro" id="IPR036291">
    <property type="entry name" value="NAD(P)-bd_dom_sf"/>
</dbReference>
<dbReference type="NCBIfam" id="TIGR01763">
    <property type="entry name" value="MalateDH_bact"/>
    <property type="match status" value="1"/>
</dbReference>
<dbReference type="NCBIfam" id="NF004863">
    <property type="entry name" value="PRK06223.1"/>
    <property type="match status" value="1"/>
</dbReference>
<dbReference type="PANTHER" id="PTHR43128">
    <property type="entry name" value="L-2-HYDROXYCARBOXYLATE DEHYDROGENASE (NAD(P)(+))"/>
    <property type="match status" value="1"/>
</dbReference>
<dbReference type="PANTHER" id="PTHR43128:SF16">
    <property type="entry name" value="L-LACTATE DEHYDROGENASE"/>
    <property type="match status" value="1"/>
</dbReference>
<dbReference type="Pfam" id="PF02866">
    <property type="entry name" value="Ldh_1_C"/>
    <property type="match status" value="1"/>
</dbReference>
<dbReference type="Pfam" id="PF00056">
    <property type="entry name" value="Ldh_1_N"/>
    <property type="match status" value="1"/>
</dbReference>
<dbReference type="PIRSF" id="PIRSF000102">
    <property type="entry name" value="Lac_mal_DH"/>
    <property type="match status" value="1"/>
</dbReference>
<dbReference type="PRINTS" id="PR00086">
    <property type="entry name" value="LLDHDRGNASE"/>
</dbReference>
<dbReference type="SUPFAM" id="SSF56327">
    <property type="entry name" value="LDH C-terminal domain-like"/>
    <property type="match status" value="1"/>
</dbReference>
<dbReference type="SUPFAM" id="SSF51735">
    <property type="entry name" value="NAD(P)-binding Rossmann-fold domains"/>
    <property type="match status" value="1"/>
</dbReference>